<name>KTHY_NEIMA</name>
<feature type="chain" id="PRO_0000155311" description="Thymidylate kinase">
    <location>
        <begin position="1"/>
        <end position="206"/>
    </location>
</feature>
<feature type="binding site" evidence="2">
    <location>
        <begin position="10"/>
        <end position="17"/>
    </location>
    <ligand>
        <name>ATP</name>
        <dbReference type="ChEBI" id="CHEBI:30616"/>
    </ligand>
</feature>
<dbReference type="EC" id="2.7.4.9"/>
<dbReference type="EMBL" id="AL157959">
    <property type="protein sequence ID" value="CAM08105.1"/>
    <property type="molecule type" value="Genomic_DNA"/>
</dbReference>
<dbReference type="PIR" id="H81932">
    <property type="entry name" value="H81932"/>
</dbReference>
<dbReference type="RefSeq" id="WP_002214191.1">
    <property type="nucleotide sequence ID" value="NC_003116.1"/>
</dbReference>
<dbReference type="SMR" id="Q9JVE7"/>
<dbReference type="EnsemblBacteria" id="CAM08105">
    <property type="protein sequence ID" value="CAM08105"/>
    <property type="gene ID" value="NMA0869"/>
</dbReference>
<dbReference type="GeneID" id="93386507"/>
<dbReference type="KEGG" id="nma:NMA0869"/>
<dbReference type="HOGENOM" id="CLU_049131_0_2_4"/>
<dbReference type="Proteomes" id="UP000000626">
    <property type="component" value="Chromosome"/>
</dbReference>
<dbReference type="GO" id="GO:0005829">
    <property type="term" value="C:cytosol"/>
    <property type="evidence" value="ECO:0007669"/>
    <property type="project" value="TreeGrafter"/>
</dbReference>
<dbReference type="GO" id="GO:0005524">
    <property type="term" value="F:ATP binding"/>
    <property type="evidence" value="ECO:0007669"/>
    <property type="project" value="UniProtKB-UniRule"/>
</dbReference>
<dbReference type="GO" id="GO:0004798">
    <property type="term" value="F:dTMP kinase activity"/>
    <property type="evidence" value="ECO:0007669"/>
    <property type="project" value="UniProtKB-UniRule"/>
</dbReference>
<dbReference type="GO" id="GO:0006233">
    <property type="term" value="P:dTDP biosynthetic process"/>
    <property type="evidence" value="ECO:0007669"/>
    <property type="project" value="InterPro"/>
</dbReference>
<dbReference type="GO" id="GO:0006235">
    <property type="term" value="P:dTTP biosynthetic process"/>
    <property type="evidence" value="ECO:0007669"/>
    <property type="project" value="UniProtKB-UniRule"/>
</dbReference>
<dbReference type="GO" id="GO:0006227">
    <property type="term" value="P:dUDP biosynthetic process"/>
    <property type="evidence" value="ECO:0007669"/>
    <property type="project" value="TreeGrafter"/>
</dbReference>
<dbReference type="CDD" id="cd01672">
    <property type="entry name" value="TMPK"/>
    <property type="match status" value="1"/>
</dbReference>
<dbReference type="FunFam" id="3.40.50.300:FF:000225">
    <property type="entry name" value="Thymidylate kinase"/>
    <property type="match status" value="1"/>
</dbReference>
<dbReference type="Gene3D" id="3.40.50.300">
    <property type="entry name" value="P-loop containing nucleotide triphosphate hydrolases"/>
    <property type="match status" value="1"/>
</dbReference>
<dbReference type="HAMAP" id="MF_00165">
    <property type="entry name" value="Thymidylate_kinase"/>
    <property type="match status" value="1"/>
</dbReference>
<dbReference type="InterPro" id="IPR027417">
    <property type="entry name" value="P-loop_NTPase"/>
</dbReference>
<dbReference type="InterPro" id="IPR039430">
    <property type="entry name" value="Thymidylate_kin-like_dom"/>
</dbReference>
<dbReference type="InterPro" id="IPR018094">
    <property type="entry name" value="Thymidylate_kinase"/>
</dbReference>
<dbReference type="NCBIfam" id="TIGR00041">
    <property type="entry name" value="DTMP_kinase"/>
    <property type="match status" value="1"/>
</dbReference>
<dbReference type="PANTHER" id="PTHR10344">
    <property type="entry name" value="THYMIDYLATE KINASE"/>
    <property type="match status" value="1"/>
</dbReference>
<dbReference type="PANTHER" id="PTHR10344:SF4">
    <property type="entry name" value="UMP-CMP KINASE 2, MITOCHONDRIAL"/>
    <property type="match status" value="1"/>
</dbReference>
<dbReference type="Pfam" id="PF02223">
    <property type="entry name" value="Thymidylate_kin"/>
    <property type="match status" value="1"/>
</dbReference>
<dbReference type="SUPFAM" id="SSF52540">
    <property type="entry name" value="P-loop containing nucleoside triphosphate hydrolases"/>
    <property type="match status" value="1"/>
</dbReference>
<accession>Q9JVE7</accession>
<accession>A1IQS1</accession>
<keyword id="KW-0067">ATP-binding</keyword>
<keyword id="KW-0418">Kinase</keyword>
<keyword id="KW-0545">Nucleotide biosynthesis</keyword>
<keyword id="KW-0547">Nucleotide-binding</keyword>
<keyword id="KW-0808">Transferase</keyword>
<protein>
    <recommendedName>
        <fullName>Thymidylate kinase</fullName>
        <ecNumber>2.7.4.9</ecNumber>
    </recommendedName>
    <alternativeName>
        <fullName>dTMP kinase</fullName>
    </alternativeName>
</protein>
<comment type="function">
    <text evidence="1">Phosphorylation of dTMP to form dTDP in both de novo and salvage pathways of dTTP synthesis.</text>
</comment>
<comment type="catalytic activity">
    <reaction>
        <text>dTMP + ATP = dTDP + ADP</text>
        <dbReference type="Rhea" id="RHEA:13517"/>
        <dbReference type="ChEBI" id="CHEBI:30616"/>
        <dbReference type="ChEBI" id="CHEBI:58369"/>
        <dbReference type="ChEBI" id="CHEBI:63528"/>
        <dbReference type="ChEBI" id="CHEBI:456216"/>
        <dbReference type="EC" id="2.7.4.9"/>
    </reaction>
</comment>
<comment type="similarity">
    <text evidence="3">Belongs to the thymidylate kinase family.</text>
</comment>
<reference key="1">
    <citation type="journal article" date="2000" name="Nature">
        <title>Complete DNA sequence of a serogroup A strain of Neisseria meningitidis Z2491.</title>
        <authorList>
            <person name="Parkhill J."/>
            <person name="Achtman M."/>
            <person name="James K.D."/>
            <person name="Bentley S.D."/>
            <person name="Churcher C.M."/>
            <person name="Klee S.R."/>
            <person name="Morelli G."/>
            <person name="Basham D."/>
            <person name="Brown D."/>
            <person name="Chillingworth T."/>
            <person name="Davies R.M."/>
            <person name="Davis P."/>
            <person name="Devlin K."/>
            <person name="Feltwell T."/>
            <person name="Hamlin N."/>
            <person name="Holroyd S."/>
            <person name="Jagels K."/>
            <person name="Leather S."/>
            <person name="Moule S."/>
            <person name="Mungall K.L."/>
            <person name="Quail M.A."/>
            <person name="Rajandream M.A."/>
            <person name="Rutherford K.M."/>
            <person name="Simmonds M."/>
            <person name="Skelton J."/>
            <person name="Whitehead S."/>
            <person name="Spratt B.G."/>
            <person name="Barrell B.G."/>
        </authorList>
    </citation>
    <scope>NUCLEOTIDE SEQUENCE [LARGE SCALE GENOMIC DNA]</scope>
    <source>
        <strain>DSM 15465 / Z2491</strain>
    </source>
</reference>
<organism>
    <name type="scientific">Neisseria meningitidis serogroup A / serotype 4A (strain DSM 15465 / Z2491)</name>
    <dbReference type="NCBI Taxonomy" id="122587"/>
    <lineage>
        <taxon>Bacteria</taxon>
        <taxon>Pseudomonadati</taxon>
        <taxon>Pseudomonadota</taxon>
        <taxon>Betaproteobacteria</taxon>
        <taxon>Neisseriales</taxon>
        <taxon>Neisseriaceae</taxon>
        <taxon>Neisseria</taxon>
    </lineage>
</organism>
<gene>
    <name type="primary">tmk</name>
    <name type="ordered locus">NMA0869</name>
</gene>
<evidence type="ECO:0000250" key="1"/>
<evidence type="ECO:0000255" key="2"/>
<evidence type="ECO:0000305" key="3"/>
<proteinExistence type="inferred from homology"/>
<sequence>MKPQFITLDGIDGAGKSTNLAVIKAWFERRGLPVLFTREPGGTPVGEALREILLNPETKAGLRAETLMMFAARMQHIEDVILPALSDGIHVVSDRFTDATFAYQGGGRGMPSEDIEILEHWVQGGLRPDLTLLLDVPLEVSMARIGQTREKDRFEQEQADFFMRVRSVYLNRAAACPERYAVIDSNLGLDEVRNSIEKVLDRHFGC</sequence>